<organism>
    <name type="scientific">Cronobacter sakazakii (strain ATCC BAA-894)</name>
    <name type="common">Enterobacter sakazakii</name>
    <dbReference type="NCBI Taxonomy" id="290339"/>
    <lineage>
        <taxon>Bacteria</taxon>
        <taxon>Pseudomonadati</taxon>
        <taxon>Pseudomonadota</taxon>
        <taxon>Gammaproteobacteria</taxon>
        <taxon>Enterobacterales</taxon>
        <taxon>Enterobacteriaceae</taxon>
        <taxon>Cronobacter</taxon>
    </lineage>
</organism>
<name>SUFE_CROS8</name>
<comment type="function">
    <text evidence="1">Participates in cysteine desulfuration mediated by SufS. Cysteine desulfuration mobilizes sulfur from L-cysteine to yield L-alanine and constitutes an essential step in sulfur metabolism for biosynthesis of a variety of sulfur-containing biomolecules. Functions as a sulfur acceptor for SufS, by mediating the direct transfer of the sulfur atom from the S-sulfanylcysteine of SufS, an intermediate product of cysteine desulfuration process.</text>
</comment>
<comment type="pathway">
    <text evidence="1">Cofactor biosynthesis; iron-sulfur cluster biosynthesis.</text>
</comment>
<comment type="subunit">
    <text evidence="1">Homodimer. Interacts with SufS.</text>
</comment>
<comment type="subcellular location">
    <subcellularLocation>
        <location evidence="1">Cytoplasm</location>
    </subcellularLocation>
</comment>
<comment type="similarity">
    <text evidence="1">Belongs to the SufE family.</text>
</comment>
<feature type="chain" id="PRO_1000070442" description="Cysteine desulfuration protein SufE">
    <location>
        <begin position="1"/>
        <end position="138"/>
    </location>
</feature>
<feature type="active site" description="Cysteine persulfide intermediate" evidence="1">
    <location>
        <position position="51"/>
    </location>
</feature>
<proteinExistence type="inferred from homology"/>
<dbReference type="EMBL" id="CP000783">
    <property type="protein sequence ID" value="ABU77339.1"/>
    <property type="molecule type" value="Genomic_DNA"/>
</dbReference>
<dbReference type="RefSeq" id="WP_007783745.1">
    <property type="nucleotide sequence ID" value="NC_009778.1"/>
</dbReference>
<dbReference type="SMR" id="A7MF58"/>
<dbReference type="GeneID" id="56730853"/>
<dbReference type="KEGG" id="esa:ESA_02089"/>
<dbReference type="HOGENOM" id="CLU_124502_1_1_6"/>
<dbReference type="UniPathway" id="UPA00266"/>
<dbReference type="Proteomes" id="UP000000260">
    <property type="component" value="Chromosome"/>
</dbReference>
<dbReference type="GO" id="GO:0005737">
    <property type="term" value="C:cytoplasm"/>
    <property type="evidence" value="ECO:0007669"/>
    <property type="project" value="UniProtKB-SubCell"/>
</dbReference>
<dbReference type="GO" id="GO:0016226">
    <property type="term" value="P:iron-sulfur cluster assembly"/>
    <property type="evidence" value="ECO:0007669"/>
    <property type="project" value="InterPro"/>
</dbReference>
<dbReference type="GO" id="GO:0006790">
    <property type="term" value="P:sulfur compound metabolic process"/>
    <property type="evidence" value="ECO:0007669"/>
    <property type="project" value="InterPro"/>
</dbReference>
<dbReference type="Gene3D" id="3.90.1010.10">
    <property type="match status" value="1"/>
</dbReference>
<dbReference type="HAMAP" id="MF_01832">
    <property type="entry name" value="SufE"/>
    <property type="match status" value="1"/>
</dbReference>
<dbReference type="InterPro" id="IPR023939">
    <property type="entry name" value="Cysteine_desulfuration_SufE"/>
</dbReference>
<dbReference type="InterPro" id="IPR003808">
    <property type="entry name" value="Fe-S_metab-assoc_dom"/>
</dbReference>
<dbReference type="NCBIfam" id="NF006792">
    <property type="entry name" value="PRK09296.1"/>
    <property type="match status" value="1"/>
</dbReference>
<dbReference type="PANTHER" id="PTHR43597:SF3">
    <property type="entry name" value="CYSTEINE DESULFURATION PROTEIN SUFE"/>
    <property type="match status" value="1"/>
</dbReference>
<dbReference type="PANTHER" id="PTHR43597">
    <property type="entry name" value="SULFUR ACCEPTOR PROTEIN CSDE"/>
    <property type="match status" value="1"/>
</dbReference>
<dbReference type="Pfam" id="PF02657">
    <property type="entry name" value="SufE"/>
    <property type="match status" value="1"/>
</dbReference>
<dbReference type="SUPFAM" id="SSF82649">
    <property type="entry name" value="SufE/NifU"/>
    <property type="match status" value="1"/>
</dbReference>
<protein>
    <recommendedName>
        <fullName evidence="1">Cysteine desulfuration protein SufE</fullName>
    </recommendedName>
</protein>
<accession>A7MF58</accession>
<gene>
    <name evidence="1" type="primary">sufE</name>
    <name type="ordered locus">ESA_02089</name>
</gene>
<sequence length="138" mass="15617">MAGLPEKEKLLRNFNRCANWEEKYLYIIELGQRLAPLDDAERTPAHRIQGCQSQVWIVMNPGENGVIEMRGDSDAAIVKGLIAVVFALYQQMTAQDIVNFDVRPWFEEMSLTQHLTPSRSQGLEAMIRAIRAKAADLS</sequence>
<evidence type="ECO:0000255" key="1">
    <source>
        <dbReference type="HAMAP-Rule" id="MF_01832"/>
    </source>
</evidence>
<keyword id="KW-0963">Cytoplasm</keyword>
<keyword id="KW-1185">Reference proteome</keyword>
<reference key="1">
    <citation type="journal article" date="2010" name="PLoS ONE">
        <title>Genome sequence of Cronobacter sakazakii BAA-894 and comparative genomic hybridization analysis with other Cronobacter species.</title>
        <authorList>
            <person name="Kucerova E."/>
            <person name="Clifton S.W."/>
            <person name="Xia X.Q."/>
            <person name="Long F."/>
            <person name="Porwollik S."/>
            <person name="Fulton L."/>
            <person name="Fronick C."/>
            <person name="Minx P."/>
            <person name="Kyung K."/>
            <person name="Warren W."/>
            <person name="Fulton R."/>
            <person name="Feng D."/>
            <person name="Wollam A."/>
            <person name="Shah N."/>
            <person name="Bhonagiri V."/>
            <person name="Nash W.E."/>
            <person name="Hallsworth-Pepin K."/>
            <person name="Wilson R.K."/>
            <person name="McClelland M."/>
            <person name="Forsythe S.J."/>
        </authorList>
    </citation>
    <scope>NUCLEOTIDE SEQUENCE [LARGE SCALE GENOMIC DNA]</scope>
    <source>
        <strain>ATCC BAA-894</strain>
    </source>
</reference>